<keyword id="KW-0687">Ribonucleoprotein</keyword>
<keyword id="KW-0689">Ribosomal protein</keyword>
<keyword id="KW-0694">RNA-binding</keyword>
<keyword id="KW-0699">rRNA-binding</keyword>
<accession>A8GVB7</accession>
<dbReference type="EMBL" id="CP000849">
    <property type="protein sequence ID" value="ABV78794.1"/>
    <property type="molecule type" value="Genomic_DNA"/>
</dbReference>
<dbReference type="RefSeq" id="WP_011477718.1">
    <property type="nucleotide sequence ID" value="NC_009883.1"/>
</dbReference>
<dbReference type="SMR" id="A8GVB7"/>
<dbReference type="KEGG" id="rbo:A1I_02050"/>
<dbReference type="HOGENOM" id="CLU_036235_2_1_5"/>
<dbReference type="GO" id="GO:0015934">
    <property type="term" value="C:large ribosomal subunit"/>
    <property type="evidence" value="ECO:0007669"/>
    <property type="project" value="InterPro"/>
</dbReference>
<dbReference type="GO" id="GO:0019843">
    <property type="term" value="F:rRNA binding"/>
    <property type="evidence" value="ECO:0007669"/>
    <property type="project" value="UniProtKB-UniRule"/>
</dbReference>
<dbReference type="GO" id="GO:0003735">
    <property type="term" value="F:structural constituent of ribosome"/>
    <property type="evidence" value="ECO:0007669"/>
    <property type="project" value="InterPro"/>
</dbReference>
<dbReference type="GO" id="GO:0016740">
    <property type="term" value="F:transferase activity"/>
    <property type="evidence" value="ECO:0007669"/>
    <property type="project" value="InterPro"/>
</dbReference>
<dbReference type="GO" id="GO:0006412">
    <property type="term" value="P:translation"/>
    <property type="evidence" value="ECO:0007669"/>
    <property type="project" value="UniProtKB-UniRule"/>
</dbReference>
<dbReference type="FunFam" id="2.30.30.30:FF:000001">
    <property type="entry name" value="50S ribosomal protein L2"/>
    <property type="match status" value="1"/>
</dbReference>
<dbReference type="FunFam" id="2.40.50.140:FF:000003">
    <property type="entry name" value="50S ribosomal protein L2"/>
    <property type="match status" value="1"/>
</dbReference>
<dbReference type="FunFam" id="4.10.950.10:FF:000001">
    <property type="entry name" value="50S ribosomal protein L2"/>
    <property type="match status" value="1"/>
</dbReference>
<dbReference type="Gene3D" id="2.30.30.30">
    <property type="match status" value="1"/>
</dbReference>
<dbReference type="Gene3D" id="2.40.50.140">
    <property type="entry name" value="Nucleic acid-binding proteins"/>
    <property type="match status" value="1"/>
</dbReference>
<dbReference type="Gene3D" id="4.10.950.10">
    <property type="entry name" value="Ribosomal protein L2, domain 3"/>
    <property type="match status" value="1"/>
</dbReference>
<dbReference type="HAMAP" id="MF_01320_B">
    <property type="entry name" value="Ribosomal_uL2_B"/>
    <property type="match status" value="1"/>
</dbReference>
<dbReference type="InterPro" id="IPR012340">
    <property type="entry name" value="NA-bd_OB-fold"/>
</dbReference>
<dbReference type="InterPro" id="IPR014722">
    <property type="entry name" value="Rib_uL2_dom2"/>
</dbReference>
<dbReference type="InterPro" id="IPR002171">
    <property type="entry name" value="Ribosomal_uL2"/>
</dbReference>
<dbReference type="InterPro" id="IPR005880">
    <property type="entry name" value="Ribosomal_uL2_bac/org-type"/>
</dbReference>
<dbReference type="InterPro" id="IPR022669">
    <property type="entry name" value="Ribosomal_uL2_C"/>
</dbReference>
<dbReference type="InterPro" id="IPR022671">
    <property type="entry name" value="Ribosomal_uL2_CS"/>
</dbReference>
<dbReference type="InterPro" id="IPR014726">
    <property type="entry name" value="Ribosomal_uL2_dom3"/>
</dbReference>
<dbReference type="InterPro" id="IPR022666">
    <property type="entry name" value="Ribosomal_uL2_RNA-bd_dom"/>
</dbReference>
<dbReference type="InterPro" id="IPR008991">
    <property type="entry name" value="Translation_prot_SH3-like_sf"/>
</dbReference>
<dbReference type="NCBIfam" id="TIGR01171">
    <property type="entry name" value="rplB_bact"/>
    <property type="match status" value="1"/>
</dbReference>
<dbReference type="PANTHER" id="PTHR13691:SF5">
    <property type="entry name" value="LARGE RIBOSOMAL SUBUNIT PROTEIN UL2M"/>
    <property type="match status" value="1"/>
</dbReference>
<dbReference type="PANTHER" id="PTHR13691">
    <property type="entry name" value="RIBOSOMAL PROTEIN L2"/>
    <property type="match status" value="1"/>
</dbReference>
<dbReference type="Pfam" id="PF00181">
    <property type="entry name" value="Ribosomal_L2"/>
    <property type="match status" value="1"/>
</dbReference>
<dbReference type="Pfam" id="PF03947">
    <property type="entry name" value="Ribosomal_L2_C"/>
    <property type="match status" value="1"/>
</dbReference>
<dbReference type="PIRSF" id="PIRSF002158">
    <property type="entry name" value="Ribosomal_L2"/>
    <property type="match status" value="1"/>
</dbReference>
<dbReference type="SMART" id="SM01383">
    <property type="entry name" value="Ribosomal_L2"/>
    <property type="match status" value="1"/>
</dbReference>
<dbReference type="SMART" id="SM01382">
    <property type="entry name" value="Ribosomal_L2_C"/>
    <property type="match status" value="1"/>
</dbReference>
<dbReference type="SUPFAM" id="SSF50249">
    <property type="entry name" value="Nucleic acid-binding proteins"/>
    <property type="match status" value="1"/>
</dbReference>
<dbReference type="SUPFAM" id="SSF50104">
    <property type="entry name" value="Translation proteins SH3-like domain"/>
    <property type="match status" value="1"/>
</dbReference>
<dbReference type="PROSITE" id="PS00467">
    <property type="entry name" value="RIBOSOMAL_L2"/>
    <property type="match status" value="1"/>
</dbReference>
<sequence length="273" mass="30267">MALKSFNPITPSLRELVQVDRTSLWKGRPFKALTKGISKTGGRNNQGRITSWQRGGGHKRLYRVIDFKRNKLDISAIVERIEYDPNRTAFIALIKYEDGEHAYILAPQKLVVGDKIISSKDADIKIGNCLPLRYIPIGTTLHNVEMKVGKGGQIARSAGTSVDLVGKDSGYAQIKLKSGEFRLVPLDCMATIGTVSNPDQKNINLGKAGRNRWLGWRPHVRGVAMNPVDHPHGGGEGKTSGGRHPVTPWGFPTKGKKTRKNKRTSKFIIKKRK</sequence>
<name>RL2_RICB8</name>
<proteinExistence type="inferred from homology"/>
<reference key="1">
    <citation type="submission" date="2007-09" db="EMBL/GenBank/DDBJ databases">
        <title>Complete genome sequencing of Rickettsia bellii.</title>
        <authorList>
            <person name="Madan A."/>
            <person name="Lee H."/>
            <person name="Madan A."/>
            <person name="Yoon J.-G."/>
            <person name="Ryu G.-Y."/>
            <person name="Dasch G."/>
            <person name="Ereemeva M."/>
        </authorList>
    </citation>
    <scope>NUCLEOTIDE SEQUENCE [LARGE SCALE GENOMIC DNA]</scope>
    <source>
        <strain>OSU 85-389</strain>
    </source>
</reference>
<organism>
    <name type="scientific">Rickettsia bellii (strain OSU 85-389)</name>
    <dbReference type="NCBI Taxonomy" id="391896"/>
    <lineage>
        <taxon>Bacteria</taxon>
        <taxon>Pseudomonadati</taxon>
        <taxon>Pseudomonadota</taxon>
        <taxon>Alphaproteobacteria</taxon>
        <taxon>Rickettsiales</taxon>
        <taxon>Rickettsiaceae</taxon>
        <taxon>Rickettsieae</taxon>
        <taxon>Rickettsia</taxon>
        <taxon>belli group</taxon>
    </lineage>
</organism>
<evidence type="ECO:0000255" key="1">
    <source>
        <dbReference type="HAMAP-Rule" id="MF_01320"/>
    </source>
</evidence>
<evidence type="ECO:0000256" key="2">
    <source>
        <dbReference type="SAM" id="MobiDB-lite"/>
    </source>
</evidence>
<evidence type="ECO:0000305" key="3"/>
<gene>
    <name evidence="1" type="primary">rplB</name>
    <name type="ordered locus">A1I_02050</name>
</gene>
<comment type="function">
    <text evidence="1">One of the primary rRNA binding proteins. Required for association of the 30S and 50S subunits to form the 70S ribosome, for tRNA binding and peptide bond formation. It has been suggested to have peptidyltransferase activity; this is somewhat controversial. Makes several contacts with the 16S rRNA in the 70S ribosome.</text>
</comment>
<comment type="subunit">
    <text evidence="1">Part of the 50S ribosomal subunit. Forms a bridge to the 30S subunit in the 70S ribosome.</text>
</comment>
<comment type="similarity">
    <text evidence="1">Belongs to the universal ribosomal protein uL2 family.</text>
</comment>
<feature type="chain" id="PRO_1000051946" description="Large ribosomal subunit protein uL2">
    <location>
        <begin position="1"/>
        <end position="273"/>
    </location>
</feature>
<feature type="region of interest" description="Disordered" evidence="2">
    <location>
        <begin position="228"/>
        <end position="273"/>
    </location>
</feature>
<feature type="compositionally biased region" description="Basic residues" evidence="2">
    <location>
        <begin position="254"/>
        <end position="273"/>
    </location>
</feature>
<protein>
    <recommendedName>
        <fullName evidence="1">Large ribosomal subunit protein uL2</fullName>
    </recommendedName>
    <alternativeName>
        <fullName evidence="3">50S ribosomal protein L2</fullName>
    </alternativeName>
</protein>